<feature type="chain" id="PRO_0000326716" description="Acylphosphatase">
    <location>
        <begin position="1"/>
        <end position="91"/>
    </location>
</feature>
<feature type="domain" description="Acylphosphatase-like" evidence="1">
    <location>
        <begin position="4"/>
        <end position="91"/>
    </location>
</feature>
<feature type="active site" evidence="1">
    <location>
        <position position="19"/>
    </location>
</feature>
<feature type="active site" evidence="1">
    <location>
        <position position="37"/>
    </location>
</feature>
<evidence type="ECO:0000255" key="1">
    <source>
        <dbReference type="PROSITE-ProRule" id="PRU00520"/>
    </source>
</evidence>
<evidence type="ECO:0000305" key="2"/>
<keyword id="KW-0378">Hydrolase</keyword>
<keyword id="KW-1185">Reference proteome</keyword>
<sequence>MKIRAIVTIKGLVQGVAFRHHTVQQAQRLGVSGWVKNLAGGDVQGCFEGEEEAVDALVAWCHHGPSRARVDRVILEREHYRGEFDDFDVRY</sequence>
<accession>Q74ES0</accession>
<protein>
    <recommendedName>
        <fullName>Acylphosphatase</fullName>
        <ecNumber>3.6.1.7</ecNumber>
    </recommendedName>
    <alternativeName>
        <fullName>Acylphosphate phosphohydrolase</fullName>
    </alternativeName>
</protein>
<gene>
    <name type="primary">acyP</name>
    <name type="ordered locus">GSU0889</name>
</gene>
<proteinExistence type="inferred from homology"/>
<reference key="1">
    <citation type="journal article" date="2003" name="Science">
        <title>Genome of Geobacter sulfurreducens: metal reduction in subsurface environments.</title>
        <authorList>
            <person name="Methe B.A."/>
            <person name="Nelson K.E."/>
            <person name="Eisen J.A."/>
            <person name="Paulsen I.T."/>
            <person name="Nelson W.C."/>
            <person name="Heidelberg J.F."/>
            <person name="Wu D."/>
            <person name="Wu M."/>
            <person name="Ward N.L."/>
            <person name="Beanan M.J."/>
            <person name="Dodson R.J."/>
            <person name="Madupu R."/>
            <person name="Brinkac L.M."/>
            <person name="Daugherty S.C."/>
            <person name="DeBoy R.T."/>
            <person name="Durkin A.S."/>
            <person name="Gwinn M.L."/>
            <person name="Kolonay J.F."/>
            <person name="Sullivan S.A."/>
            <person name="Haft D.H."/>
            <person name="Selengut J."/>
            <person name="Davidsen T.M."/>
            <person name="Zafar N."/>
            <person name="White O."/>
            <person name="Tran B."/>
            <person name="Romero C."/>
            <person name="Forberger H.A."/>
            <person name="Weidman J.F."/>
            <person name="Khouri H.M."/>
            <person name="Feldblyum T.V."/>
            <person name="Utterback T.R."/>
            <person name="Van Aken S.E."/>
            <person name="Lovley D.R."/>
            <person name="Fraser C.M."/>
        </authorList>
    </citation>
    <scope>NUCLEOTIDE SEQUENCE [LARGE SCALE GENOMIC DNA]</scope>
    <source>
        <strain>ATCC 51573 / DSM 12127 / PCA</strain>
    </source>
</reference>
<organism>
    <name type="scientific">Geobacter sulfurreducens (strain ATCC 51573 / DSM 12127 / PCA)</name>
    <dbReference type="NCBI Taxonomy" id="243231"/>
    <lineage>
        <taxon>Bacteria</taxon>
        <taxon>Pseudomonadati</taxon>
        <taxon>Thermodesulfobacteriota</taxon>
        <taxon>Desulfuromonadia</taxon>
        <taxon>Geobacterales</taxon>
        <taxon>Geobacteraceae</taxon>
        <taxon>Geobacter</taxon>
    </lineage>
</organism>
<dbReference type="EC" id="3.6.1.7"/>
<dbReference type="EMBL" id="AE017180">
    <property type="protein sequence ID" value="AAR34219.1"/>
    <property type="molecule type" value="Genomic_DNA"/>
</dbReference>
<dbReference type="RefSeq" id="NP_951946.1">
    <property type="nucleotide sequence ID" value="NC_002939.5"/>
</dbReference>
<dbReference type="RefSeq" id="WP_010941553.1">
    <property type="nucleotide sequence ID" value="NC_002939.5"/>
</dbReference>
<dbReference type="SMR" id="Q74ES0"/>
<dbReference type="FunCoup" id="Q74ES0">
    <property type="interactions" value="301"/>
</dbReference>
<dbReference type="STRING" id="243231.GSU0889"/>
<dbReference type="EnsemblBacteria" id="AAR34219">
    <property type="protein sequence ID" value="AAR34219"/>
    <property type="gene ID" value="GSU0889"/>
</dbReference>
<dbReference type="KEGG" id="gsu:GSU0889"/>
<dbReference type="PATRIC" id="fig|243231.5.peg.887"/>
<dbReference type="eggNOG" id="COG1254">
    <property type="taxonomic scope" value="Bacteria"/>
</dbReference>
<dbReference type="HOGENOM" id="CLU_141932_1_0_7"/>
<dbReference type="InParanoid" id="Q74ES0"/>
<dbReference type="OrthoDB" id="5295388at2"/>
<dbReference type="Proteomes" id="UP000000577">
    <property type="component" value="Chromosome"/>
</dbReference>
<dbReference type="GO" id="GO:0003998">
    <property type="term" value="F:acylphosphatase activity"/>
    <property type="evidence" value="ECO:0000318"/>
    <property type="project" value="GO_Central"/>
</dbReference>
<dbReference type="Gene3D" id="3.30.70.100">
    <property type="match status" value="1"/>
</dbReference>
<dbReference type="InterPro" id="IPR020456">
    <property type="entry name" value="Acylphosphatase"/>
</dbReference>
<dbReference type="InterPro" id="IPR001792">
    <property type="entry name" value="Acylphosphatase-like_dom"/>
</dbReference>
<dbReference type="InterPro" id="IPR036046">
    <property type="entry name" value="Acylphosphatase-like_dom_sf"/>
</dbReference>
<dbReference type="InterPro" id="IPR017968">
    <property type="entry name" value="Acylphosphatase_CS"/>
</dbReference>
<dbReference type="NCBIfam" id="NF011011">
    <property type="entry name" value="PRK14438.1"/>
    <property type="match status" value="1"/>
</dbReference>
<dbReference type="PANTHER" id="PTHR10029">
    <property type="entry name" value="ACYLPHOSPHATASE"/>
    <property type="match status" value="1"/>
</dbReference>
<dbReference type="PANTHER" id="PTHR10029:SF3">
    <property type="entry name" value="ACYLPHOSPHATASE-RELATED"/>
    <property type="match status" value="1"/>
</dbReference>
<dbReference type="Pfam" id="PF00708">
    <property type="entry name" value="Acylphosphatase"/>
    <property type="match status" value="1"/>
</dbReference>
<dbReference type="PRINTS" id="PR00112">
    <property type="entry name" value="ACYLPHPHTASE"/>
</dbReference>
<dbReference type="SUPFAM" id="SSF54975">
    <property type="entry name" value="Acylphosphatase/BLUF domain-like"/>
    <property type="match status" value="1"/>
</dbReference>
<dbReference type="PROSITE" id="PS00150">
    <property type="entry name" value="ACYLPHOSPHATASE_1"/>
    <property type="match status" value="1"/>
</dbReference>
<dbReference type="PROSITE" id="PS00151">
    <property type="entry name" value="ACYLPHOSPHATASE_2"/>
    <property type="match status" value="1"/>
</dbReference>
<dbReference type="PROSITE" id="PS51160">
    <property type="entry name" value="ACYLPHOSPHATASE_3"/>
    <property type="match status" value="1"/>
</dbReference>
<name>ACYP_GEOSL</name>
<comment type="catalytic activity">
    <reaction>
        <text>an acyl phosphate + H2O = a carboxylate + phosphate + H(+)</text>
        <dbReference type="Rhea" id="RHEA:14965"/>
        <dbReference type="ChEBI" id="CHEBI:15377"/>
        <dbReference type="ChEBI" id="CHEBI:15378"/>
        <dbReference type="ChEBI" id="CHEBI:29067"/>
        <dbReference type="ChEBI" id="CHEBI:43474"/>
        <dbReference type="ChEBI" id="CHEBI:59918"/>
        <dbReference type="EC" id="3.6.1.7"/>
    </reaction>
</comment>
<comment type="similarity">
    <text evidence="2">Belongs to the acylphosphatase family.</text>
</comment>